<reference key="1">
    <citation type="journal article" date="2009" name="Appl. Environ. Microbiol.">
        <title>Complete genome sequence of the chemolithoautotrophic marine magnetotactic coccus strain MC-1.</title>
        <authorList>
            <person name="Schubbe S."/>
            <person name="Williams T.J."/>
            <person name="Xie G."/>
            <person name="Kiss H.E."/>
            <person name="Brettin T.S."/>
            <person name="Martinez D."/>
            <person name="Ross C.A."/>
            <person name="Schuler D."/>
            <person name="Cox B.L."/>
            <person name="Nealson K.H."/>
            <person name="Bazylinski D.A."/>
        </authorList>
    </citation>
    <scope>NUCLEOTIDE SEQUENCE [LARGE SCALE GENOMIC DNA]</scope>
    <source>
        <strain>ATCC BAA-1437 / JCM 17883 / MC-1</strain>
    </source>
</reference>
<keyword id="KW-0963">Cytoplasm</keyword>
<keyword id="KW-0448">Lipopolysaccharide biosynthesis</keyword>
<keyword id="KW-1185">Reference proteome</keyword>
<keyword id="KW-0808">Transferase</keyword>
<evidence type="ECO:0000255" key="1">
    <source>
        <dbReference type="HAMAP-Rule" id="MF_00056"/>
    </source>
</evidence>
<dbReference type="EC" id="2.5.1.55" evidence="1"/>
<dbReference type="EMBL" id="CP000471">
    <property type="protein sequence ID" value="ABK44067.1"/>
    <property type="molecule type" value="Genomic_DNA"/>
</dbReference>
<dbReference type="RefSeq" id="WP_011713217.1">
    <property type="nucleotide sequence ID" value="NC_008576.1"/>
</dbReference>
<dbReference type="SMR" id="A0L7X4"/>
<dbReference type="STRING" id="156889.Mmc1_1558"/>
<dbReference type="KEGG" id="mgm:Mmc1_1558"/>
<dbReference type="eggNOG" id="COG2877">
    <property type="taxonomic scope" value="Bacteria"/>
</dbReference>
<dbReference type="HOGENOM" id="CLU_036666_0_0_5"/>
<dbReference type="OrthoDB" id="9776934at2"/>
<dbReference type="UniPathway" id="UPA00030"/>
<dbReference type="UniPathway" id="UPA00357">
    <property type="reaction ID" value="UER00474"/>
</dbReference>
<dbReference type="Proteomes" id="UP000002586">
    <property type="component" value="Chromosome"/>
</dbReference>
<dbReference type="GO" id="GO:0005737">
    <property type="term" value="C:cytoplasm"/>
    <property type="evidence" value="ECO:0007669"/>
    <property type="project" value="UniProtKB-SubCell"/>
</dbReference>
<dbReference type="GO" id="GO:0008676">
    <property type="term" value="F:3-deoxy-8-phosphooctulonate synthase activity"/>
    <property type="evidence" value="ECO:0007669"/>
    <property type="project" value="UniProtKB-UniRule"/>
</dbReference>
<dbReference type="GO" id="GO:0019294">
    <property type="term" value="P:keto-3-deoxy-D-manno-octulosonic acid biosynthetic process"/>
    <property type="evidence" value="ECO:0007669"/>
    <property type="project" value="UniProtKB-UniRule"/>
</dbReference>
<dbReference type="Gene3D" id="3.20.20.70">
    <property type="entry name" value="Aldolase class I"/>
    <property type="match status" value="1"/>
</dbReference>
<dbReference type="HAMAP" id="MF_00056">
    <property type="entry name" value="KDO8P_synth"/>
    <property type="match status" value="1"/>
</dbReference>
<dbReference type="InterPro" id="IPR013785">
    <property type="entry name" value="Aldolase_TIM"/>
</dbReference>
<dbReference type="InterPro" id="IPR006218">
    <property type="entry name" value="DAHP1/KDSA"/>
</dbReference>
<dbReference type="InterPro" id="IPR006269">
    <property type="entry name" value="KDO8P_synthase"/>
</dbReference>
<dbReference type="NCBIfam" id="TIGR01362">
    <property type="entry name" value="KDO8P_synth"/>
    <property type="match status" value="1"/>
</dbReference>
<dbReference type="NCBIfam" id="NF003543">
    <property type="entry name" value="PRK05198.1"/>
    <property type="match status" value="1"/>
</dbReference>
<dbReference type="PANTHER" id="PTHR21057">
    <property type="entry name" value="PHOSPHO-2-DEHYDRO-3-DEOXYHEPTONATE ALDOLASE"/>
    <property type="match status" value="1"/>
</dbReference>
<dbReference type="Pfam" id="PF00793">
    <property type="entry name" value="DAHP_synth_1"/>
    <property type="match status" value="1"/>
</dbReference>
<dbReference type="SUPFAM" id="SSF51569">
    <property type="entry name" value="Aldolase"/>
    <property type="match status" value="1"/>
</dbReference>
<name>KDSA_MAGMM</name>
<accession>A0L7X4</accession>
<gene>
    <name evidence="1" type="primary">kdsA</name>
    <name type="ordered locus">Mmc1_1558</name>
</gene>
<sequence>MTPRTITVDTVRFGNHLPMTLIAGPCVIEGLEFALRTAEALKQICEGVGVELVYKSSFDKANRTSEGSFRGPGMEAGLRILERVRREVGVPVITDVHEADQCVAVAEVVDMLQTPAFLCRQTDFIQAAARPGKPVNIKKGQFLAPQDMARVAAKAAATGNENILLCERGFSFGYQNLVVDMRGLSIMAQSGYPVIFDATHSVQQPGALGGASGGDRRFVSDLARAAVAVGVAGVFMEVHPDPDHAPCDGPNMLPMAHLSPLLDQLKALDRIRKEAMALESGLSLGDA</sequence>
<proteinExistence type="inferred from homology"/>
<feature type="chain" id="PRO_0000304457" description="2-dehydro-3-deoxyphosphooctonate aldolase">
    <location>
        <begin position="1"/>
        <end position="287"/>
    </location>
</feature>
<organism>
    <name type="scientific">Magnetococcus marinus (strain ATCC BAA-1437 / JCM 17883 / MC-1)</name>
    <dbReference type="NCBI Taxonomy" id="156889"/>
    <lineage>
        <taxon>Bacteria</taxon>
        <taxon>Pseudomonadati</taxon>
        <taxon>Pseudomonadota</taxon>
        <taxon>Alphaproteobacteria</taxon>
        <taxon>Magnetococcales</taxon>
        <taxon>Magnetococcaceae</taxon>
        <taxon>Magnetococcus</taxon>
    </lineage>
</organism>
<protein>
    <recommendedName>
        <fullName evidence="1">2-dehydro-3-deoxyphosphooctonate aldolase</fullName>
        <ecNumber evidence="1">2.5.1.55</ecNumber>
    </recommendedName>
    <alternativeName>
        <fullName evidence="1">3-deoxy-D-manno-octulosonic acid 8-phosphate synthase</fullName>
    </alternativeName>
    <alternativeName>
        <fullName evidence="1">KDO-8-phosphate synthase</fullName>
        <shortName evidence="1">KDO 8-P synthase</shortName>
        <shortName evidence="1">KDOPS</shortName>
    </alternativeName>
    <alternativeName>
        <fullName evidence="1">Phospho-2-dehydro-3-deoxyoctonate aldolase</fullName>
    </alternativeName>
</protein>
<comment type="catalytic activity">
    <reaction evidence="1">
        <text>D-arabinose 5-phosphate + phosphoenolpyruvate + H2O = 3-deoxy-alpha-D-manno-2-octulosonate-8-phosphate + phosphate</text>
        <dbReference type="Rhea" id="RHEA:14053"/>
        <dbReference type="ChEBI" id="CHEBI:15377"/>
        <dbReference type="ChEBI" id="CHEBI:43474"/>
        <dbReference type="ChEBI" id="CHEBI:57693"/>
        <dbReference type="ChEBI" id="CHEBI:58702"/>
        <dbReference type="ChEBI" id="CHEBI:85985"/>
        <dbReference type="EC" id="2.5.1.55"/>
    </reaction>
</comment>
<comment type="pathway">
    <text evidence="1">Carbohydrate biosynthesis; 3-deoxy-D-manno-octulosonate biosynthesis; 3-deoxy-D-manno-octulosonate from D-ribulose 5-phosphate: step 2/3.</text>
</comment>
<comment type="pathway">
    <text evidence="1">Bacterial outer membrane biogenesis; lipopolysaccharide biosynthesis.</text>
</comment>
<comment type="subcellular location">
    <subcellularLocation>
        <location evidence="1">Cytoplasm</location>
    </subcellularLocation>
</comment>
<comment type="similarity">
    <text evidence="1">Belongs to the KdsA family.</text>
</comment>